<dbReference type="EMBL" id="CP001349">
    <property type="protein sequence ID" value="ACL56922.1"/>
    <property type="molecule type" value="Genomic_DNA"/>
</dbReference>
<dbReference type="RefSeq" id="WP_015928611.1">
    <property type="nucleotide sequence ID" value="NC_011894.1"/>
</dbReference>
<dbReference type="SMR" id="B8IT36"/>
<dbReference type="STRING" id="460265.Mnod_1933"/>
<dbReference type="KEGG" id="mno:Mnod_1933"/>
<dbReference type="eggNOG" id="COG0203">
    <property type="taxonomic scope" value="Bacteria"/>
</dbReference>
<dbReference type="HOGENOM" id="CLU_074407_2_0_5"/>
<dbReference type="OrthoDB" id="9809073at2"/>
<dbReference type="Proteomes" id="UP000008207">
    <property type="component" value="Chromosome"/>
</dbReference>
<dbReference type="GO" id="GO:0022625">
    <property type="term" value="C:cytosolic large ribosomal subunit"/>
    <property type="evidence" value="ECO:0007669"/>
    <property type="project" value="TreeGrafter"/>
</dbReference>
<dbReference type="GO" id="GO:0003735">
    <property type="term" value="F:structural constituent of ribosome"/>
    <property type="evidence" value="ECO:0007669"/>
    <property type="project" value="InterPro"/>
</dbReference>
<dbReference type="GO" id="GO:0006412">
    <property type="term" value="P:translation"/>
    <property type="evidence" value="ECO:0007669"/>
    <property type="project" value="UniProtKB-UniRule"/>
</dbReference>
<dbReference type="FunFam" id="3.90.1030.10:FF:000001">
    <property type="entry name" value="50S ribosomal protein L17"/>
    <property type="match status" value="1"/>
</dbReference>
<dbReference type="Gene3D" id="3.90.1030.10">
    <property type="entry name" value="Ribosomal protein L17"/>
    <property type="match status" value="1"/>
</dbReference>
<dbReference type="HAMAP" id="MF_01368">
    <property type="entry name" value="Ribosomal_bL17"/>
    <property type="match status" value="1"/>
</dbReference>
<dbReference type="InterPro" id="IPR000456">
    <property type="entry name" value="Ribosomal_bL17"/>
</dbReference>
<dbReference type="InterPro" id="IPR047859">
    <property type="entry name" value="Ribosomal_bL17_CS"/>
</dbReference>
<dbReference type="InterPro" id="IPR036373">
    <property type="entry name" value="Ribosomal_bL17_sf"/>
</dbReference>
<dbReference type="NCBIfam" id="TIGR00059">
    <property type="entry name" value="L17"/>
    <property type="match status" value="1"/>
</dbReference>
<dbReference type="PANTHER" id="PTHR14413:SF16">
    <property type="entry name" value="LARGE RIBOSOMAL SUBUNIT PROTEIN BL17M"/>
    <property type="match status" value="1"/>
</dbReference>
<dbReference type="PANTHER" id="PTHR14413">
    <property type="entry name" value="RIBOSOMAL PROTEIN L17"/>
    <property type="match status" value="1"/>
</dbReference>
<dbReference type="Pfam" id="PF01196">
    <property type="entry name" value="Ribosomal_L17"/>
    <property type="match status" value="1"/>
</dbReference>
<dbReference type="SUPFAM" id="SSF64263">
    <property type="entry name" value="Prokaryotic ribosomal protein L17"/>
    <property type="match status" value="1"/>
</dbReference>
<dbReference type="PROSITE" id="PS01167">
    <property type="entry name" value="RIBOSOMAL_L17"/>
    <property type="match status" value="1"/>
</dbReference>
<keyword id="KW-1185">Reference proteome</keyword>
<keyword id="KW-0687">Ribonucleoprotein</keyword>
<keyword id="KW-0689">Ribosomal protein</keyword>
<organism>
    <name type="scientific">Methylobacterium nodulans (strain LMG 21967 / CNCM I-2342 / ORS 2060)</name>
    <dbReference type="NCBI Taxonomy" id="460265"/>
    <lineage>
        <taxon>Bacteria</taxon>
        <taxon>Pseudomonadati</taxon>
        <taxon>Pseudomonadota</taxon>
        <taxon>Alphaproteobacteria</taxon>
        <taxon>Hyphomicrobiales</taxon>
        <taxon>Methylobacteriaceae</taxon>
        <taxon>Methylobacterium</taxon>
    </lineage>
</organism>
<comment type="subunit">
    <text evidence="1">Part of the 50S ribosomal subunit. Contacts protein L32.</text>
</comment>
<comment type="similarity">
    <text evidence="1">Belongs to the bacterial ribosomal protein bL17 family.</text>
</comment>
<accession>B8IT36</accession>
<gene>
    <name evidence="1" type="primary">rplQ</name>
    <name type="ordered locus">Mnod_1933</name>
</gene>
<feature type="chain" id="PRO_1000184031" description="Large ribosomal subunit protein bL17">
    <location>
        <begin position="1"/>
        <end position="140"/>
    </location>
</feature>
<reference key="1">
    <citation type="submission" date="2009-01" db="EMBL/GenBank/DDBJ databases">
        <title>Complete sequence of chromosome of Methylobacterium nodulans ORS 2060.</title>
        <authorList>
            <consortium name="US DOE Joint Genome Institute"/>
            <person name="Lucas S."/>
            <person name="Copeland A."/>
            <person name="Lapidus A."/>
            <person name="Glavina del Rio T."/>
            <person name="Dalin E."/>
            <person name="Tice H."/>
            <person name="Bruce D."/>
            <person name="Goodwin L."/>
            <person name="Pitluck S."/>
            <person name="Sims D."/>
            <person name="Brettin T."/>
            <person name="Detter J.C."/>
            <person name="Han C."/>
            <person name="Larimer F."/>
            <person name="Land M."/>
            <person name="Hauser L."/>
            <person name="Kyrpides N."/>
            <person name="Ivanova N."/>
            <person name="Marx C.J."/>
            <person name="Richardson P."/>
        </authorList>
    </citation>
    <scope>NUCLEOTIDE SEQUENCE [LARGE SCALE GENOMIC DNA]</scope>
    <source>
        <strain>LMG 21967 / CNCM I-2342 / ORS 2060</strain>
    </source>
</reference>
<protein>
    <recommendedName>
        <fullName evidence="1">Large ribosomal subunit protein bL17</fullName>
    </recommendedName>
    <alternativeName>
        <fullName evidence="2">50S ribosomal protein L17</fullName>
    </alternativeName>
</protein>
<name>RL17_METNO</name>
<proteinExistence type="inferred from homology"/>
<evidence type="ECO:0000255" key="1">
    <source>
        <dbReference type="HAMAP-Rule" id="MF_01368"/>
    </source>
</evidence>
<evidence type="ECO:0000305" key="2"/>
<sequence length="140" mass="15763">MRHGFRGRRFNRTVEHRKAMFANMSAALIKHEQIITTLPKAKDLRPVVEKLITLGKRGDLHARRQAIAQIRDEAMVKKLFEVLGPRYQTRPGGYCRIMKAGFRYGDNAPMAVIEFVDRDVNARGQDSGPTQAAASQTEAA</sequence>